<proteinExistence type="inferred from homology"/>
<sequence>MRLYINEIKIKDDILYCYTEDSIKGLSEVGQMLVDSDNYAFAYTLDDGKAYAYLIFVQETWTMLHENTTKKIIINDELELTEFHQELTYILDNIKGNNNYGKEFVATVEETFDIE</sequence>
<reference key="1">
    <citation type="submission" date="2007-06" db="EMBL/GenBank/DDBJ databases">
        <title>Complete sequence of chromosome of Staphylococcus aureus subsp. aureus JH1.</title>
        <authorList>
            <consortium name="US DOE Joint Genome Institute"/>
            <person name="Copeland A."/>
            <person name="Lucas S."/>
            <person name="Lapidus A."/>
            <person name="Barry K."/>
            <person name="Detter J.C."/>
            <person name="Glavina del Rio T."/>
            <person name="Hammon N."/>
            <person name="Israni S."/>
            <person name="Dalin E."/>
            <person name="Tice H."/>
            <person name="Pitluck S."/>
            <person name="Chain P."/>
            <person name="Malfatti S."/>
            <person name="Shin M."/>
            <person name="Vergez L."/>
            <person name="Schmutz J."/>
            <person name="Larimer F."/>
            <person name="Land M."/>
            <person name="Hauser L."/>
            <person name="Kyrpides N."/>
            <person name="Ivanova N."/>
            <person name="Tomasz A."/>
            <person name="Richardson P."/>
        </authorList>
    </citation>
    <scope>NUCLEOTIDE SEQUENCE [LARGE SCALE GENOMIC DNA]</scope>
    <source>
        <strain>JH1</strain>
    </source>
</reference>
<evidence type="ECO:0000255" key="1">
    <source>
        <dbReference type="HAMAP-Rule" id="MF_01861"/>
    </source>
</evidence>
<name>Y1022_STAA2</name>
<accession>A6U0B0</accession>
<organism>
    <name type="scientific">Staphylococcus aureus (strain JH1)</name>
    <dbReference type="NCBI Taxonomy" id="359787"/>
    <lineage>
        <taxon>Bacteria</taxon>
        <taxon>Bacillati</taxon>
        <taxon>Bacillota</taxon>
        <taxon>Bacilli</taxon>
        <taxon>Bacillales</taxon>
        <taxon>Staphylococcaceae</taxon>
        <taxon>Staphylococcus</taxon>
    </lineage>
</organism>
<comment type="similarity">
    <text evidence="1">Belongs to the UPF0738 family.</text>
</comment>
<gene>
    <name type="ordered locus">SaurJH1_1022</name>
</gene>
<dbReference type="EMBL" id="CP000736">
    <property type="protein sequence ID" value="ABR51878.1"/>
    <property type="molecule type" value="Genomic_DNA"/>
</dbReference>
<dbReference type="KEGG" id="sah:SaurJH1_1022"/>
<dbReference type="HOGENOM" id="CLU_142282_0_0_9"/>
<dbReference type="HAMAP" id="MF_01861">
    <property type="entry name" value="UPF0738"/>
    <property type="match status" value="1"/>
</dbReference>
<dbReference type="InterPro" id="IPR020908">
    <property type="entry name" value="UPF0738"/>
</dbReference>
<dbReference type="Pfam" id="PF19785">
    <property type="entry name" value="UPF0738"/>
    <property type="match status" value="1"/>
</dbReference>
<protein>
    <recommendedName>
        <fullName evidence="1">UPF0738 protein SaurJH1_1022</fullName>
    </recommendedName>
</protein>
<feature type="chain" id="PRO_0000369659" description="UPF0738 protein SaurJH1_1022">
    <location>
        <begin position="1"/>
        <end position="115"/>
    </location>
</feature>